<gene>
    <name type="primary">ASIP</name>
</gene>
<proteinExistence type="inferred from homology"/>
<organism>
    <name type="scientific">Papio anubis</name>
    <name type="common">Olive baboon</name>
    <dbReference type="NCBI Taxonomy" id="9555"/>
    <lineage>
        <taxon>Eukaryota</taxon>
        <taxon>Metazoa</taxon>
        <taxon>Chordata</taxon>
        <taxon>Craniata</taxon>
        <taxon>Vertebrata</taxon>
        <taxon>Euteleostomi</taxon>
        <taxon>Mammalia</taxon>
        <taxon>Eutheria</taxon>
        <taxon>Euarchontoglires</taxon>
        <taxon>Primates</taxon>
        <taxon>Haplorrhini</taxon>
        <taxon>Catarrhini</taxon>
        <taxon>Cercopithecidae</taxon>
        <taxon>Cercopithecinae</taxon>
        <taxon>Papio</taxon>
    </lineage>
</organism>
<evidence type="ECO:0000250" key="1"/>
<evidence type="ECO:0000250" key="2">
    <source>
        <dbReference type="UniProtKB" id="P42127"/>
    </source>
</evidence>
<evidence type="ECO:0000250" key="3">
    <source>
        <dbReference type="UniProtKB" id="Q03288"/>
    </source>
</evidence>
<evidence type="ECO:0000255" key="4"/>
<evidence type="ECO:0000255" key="5">
    <source>
        <dbReference type="PROSITE-ProRule" id="PRU00494"/>
    </source>
</evidence>
<evidence type="ECO:0000256" key="6">
    <source>
        <dbReference type="SAM" id="MobiDB-lite"/>
    </source>
</evidence>
<protein>
    <recommendedName>
        <fullName>Agouti-signaling protein</fullName>
        <shortName>ASP</shortName>
    </recommendedName>
    <alternativeName>
        <fullName>Agouti switch protein</fullName>
    </alternativeName>
</protein>
<keyword id="KW-1015">Disulfide bond</keyword>
<keyword id="KW-0325">Glycoprotein</keyword>
<keyword id="KW-0960">Knottin</keyword>
<keyword id="KW-1185">Reference proteome</keyword>
<keyword id="KW-0964">Secreted</keyword>
<keyword id="KW-0732">Signal</keyword>
<comment type="function">
    <text evidence="3">Involved in the regulation of melanogenesis. The binding of ASP to MC1R precludes alpha-MSH initiated signaling and thus blocks production of cAMP, leading to a down-regulation of eumelanogenesis (brown/black pigment) and thus increasing synthesis of pheomelanin (yellow/red pigment) (By similarity).</text>
</comment>
<comment type="subcellular location">
    <subcellularLocation>
        <location evidence="2">Secreted</location>
    </subcellularLocation>
</comment>
<comment type="domain">
    <text evidence="1">The presence of a 'disulfide through disulfide knot' structurally defines this protein as a knottin.</text>
</comment>
<reference key="1">
    <citation type="journal article" date="2006" name="Mamm. Genome">
        <title>Investigation of the role of the agouti signaling protein gene (ASIP) in coat color evolution in primates.</title>
        <authorList>
            <person name="Mundy N.I."/>
            <person name="Kelly J."/>
        </authorList>
    </citation>
    <scope>NUCLEOTIDE SEQUENCE [GENOMIC DNA]</scope>
</reference>
<dbReference type="EMBL" id="EF094487">
    <property type="protein sequence ID" value="ABL84285.1"/>
    <property type="molecule type" value="Genomic_DNA"/>
</dbReference>
<dbReference type="RefSeq" id="NP_001157803.1">
    <property type="nucleotide sequence ID" value="NM_001164331.1"/>
</dbReference>
<dbReference type="RefSeq" id="XP_009214555.1">
    <property type="nucleotide sequence ID" value="XM_009216291.3"/>
</dbReference>
<dbReference type="RefSeq" id="XP_009214556.1">
    <property type="nucleotide sequence ID" value="XM_009216292.2"/>
</dbReference>
<dbReference type="RefSeq" id="XP_009214557.1">
    <property type="nucleotide sequence ID" value="XM_009216293.2"/>
</dbReference>
<dbReference type="RefSeq" id="XP_009214559.1">
    <property type="nucleotide sequence ID" value="XM_009216295.2"/>
</dbReference>
<dbReference type="RefSeq" id="XP_009214560.1">
    <property type="nucleotide sequence ID" value="XM_009216296.2"/>
</dbReference>
<dbReference type="RefSeq" id="XP_009214561.1">
    <property type="nucleotide sequence ID" value="XM_009216297.4"/>
</dbReference>
<dbReference type="RefSeq" id="XP_009214562.1">
    <property type="nucleotide sequence ID" value="XM_009216298.4"/>
</dbReference>
<dbReference type="STRING" id="9555.ENSPANP00000016805"/>
<dbReference type="GlyCosmos" id="A1YL70">
    <property type="glycosylation" value="1 site, No reported glycans"/>
</dbReference>
<dbReference type="Ensembl" id="ENSPANT00000013706.3">
    <property type="protein sequence ID" value="ENSPANP00000016805.1"/>
    <property type="gene ID" value="ENSPANG00000022711.3"/>
</dbReference>
<dbReference type="GeneID" id="100302661"/>
<dbReference type="KEGG" id="panu:100302661"/>
<dbReference type="CTD" id="434"/>
<dbReference type="eggNOG" id="ENOG502S5XF">
    <property type="taxonomic scope" value="Eukaryota"/>
</dbReference>
<dbReference type="GeneTree" id="ENSGT00940000154258"/>
<dbReference type="HOGENOM" id="CLU_138633_0_0_1"/>
<dbReference type="OMA" id="CHCRFFR"/>
<dbReference type="Proteomes" id="UP000028761">
    <property type="component" value="Chromosome 16"/>
</dbReference>
<dbReference type="Bgee" id="ENSPANG00000022711">
    <property type="expression patterns" value="Expressed in thyroid gland and 27 other cell types or tissues"/>
</dbReference>
<dbReference type="GO" id="GO:0005615">
    <property type="term" value="C:extracellular space"/>
    <property type="evidence" value="ECO:0000250"/>
    <property type="project" value="UniProtKB"/>
</dbReference>
<dbReference type="GO" id="GO:0005184">
    <property type="term" value="F:neuropeptide hormone activity"/>
    <property type="evidence" value="ECO:0007669"/>
    <property type="project" value="TreeGrafter"/>
</dbReference>
<dbReference type="GO" id="GO:0031781">
    <property type="term" value="F:type 3 melanocortin receptor binding"/>
    <property type="evidence" value="ECO:0007669"/>
    <property type="project" value="Ensembl"/>
</dbReference>
<dbReference type="GO" id="GO:0031782">
    <property type="term" value="F:type 4 melanocortin receptor binding"/>
    <property type="evidence" value="ECO:0007669"/>
    <property type="project" value="Ensembl"/>
</dbReference>
<dbReference type="GO" id="GO:0008343">
    <property type="term" value="P:adult feeding behavior"/>
    <property type="evidence" value="ECO:0007669"/>
    <property type="project" value="Ensembl"/>
</dbReference>
<dbReference type="GO" id="GO:0044725">
    <property type="term" value="P:epigenetic programming in the zygotic pronuclei"/>
    <property type="evidence" value="ECO:0007669"/>
    <property type="project" value="Ensembl"/>
</dbReference>
<dbReference type="GO" id="GO:0006091">
    <property type="term" value="P:generation of precursor metabolites and energy"/>
    <property type="evidence" value="ECO:0007669"/>
    <property type="project" value="Ensembl"/>
</dbReference>
<dbReference type="GO" id="GO:0009755">
    <property type="term" value="P:hormone-mediated signaling pathway"/>
    <property type="evidence" value="ECO:0007669"/>
    <property type="project" value="InterPro"/>
</dbReference>
<dbReference type="GO" id="GO:0042438">
    <property type="term" value="P:melanin biosynthetic process"/>
    <property type="evidence" value="ECO:0000250"/>
    <property type="project" value="UniProtKB"/>
</dbReference>
<dbReference type="GO" id="GO:0032438">
    <property type="term" value="P:melanosome organization"/>
    <property type="evidence" value="ECO:0007669"/>
    <property type="project" value="Ensembl"/>
</dbReference>
<dbReference type="GO" id="GO:0032402">
    <property type="term" value="P:melanosome transport"/>
    <property type="evidence" value="ECO:0007669"/>
    <property type="project" value="Ensembl"/>
</dbReference>
<dbReference type="GO" id="GO:0048023">
    <property type="term" value="P:positive regulation of melanin biosynthetic process"/>
    <property type="evidence" value="ECO:0007669"/>
    <property type="project" value="Ensembl"/>
</dbReference>
<dbReference type="FunFam" id="4.10.760.10:FF:000002">
    <property type="entry name" value="Agouti-signaling protein"/>
    <property type="match status" value="1"/>
</dbReference>
<dbReference type="Gene3D" id="4.10.760.10">
    <property type="entry name" value="Agouti domain"/>
    <property type="match status" value="1"/>
</dbReference>
<dbReference type="InterPro" id="IPR007733">
    <property type="entry name" value="Agouti"/>
</dbReference>
<dbReference type="InterPro" id="IPR027300">
    <property type="entry name" value="Agouti_dom"/>
</dbReference>
<dbReference type="InterPro" id="IPR036836">
    <property type="entry name" value="Agouti_dom_sf"/>
</dbReference>
<dbReference type="PANTHER" id="PTHR16551">
    <property type="entry name" value="AGOUTI RELATED"/>
    <property type="match status" value="1"/>
</dbReference>
<dbReference type="PANTHER" id="PTHR16551:SF1">
    <property type="entry name" value="AGOUTI-SIGNALING PROTEIN"/>
    <property type="match status" value="1"/>
</dbReference>
<dbReference type="Pfam" id="PF05039">
    <property type="entry name" value="Agouti"/>
    <property type="match status" value="1"/>
</dbReference>
<dbReference type="SMART" id="SM00792">
    <property type="entry name" value="Agouti"/>
    <property type="match status" value="1"/>
</dbReference>
<dbReference type="SUPFAM" id="SSF57055">
    <property type="entry name" value="Agouti-related protein"/>
    <property type="match status" value="1"/>
</dbReference>
<dbReference type="PROSITE" id="PS60024">
    <property type="entry name" value="AGOUTI_1"/>
    <property type="match status" value="1"/>
</dbReference>
<dbReference type="PROSITE" id="PS51150">
    <property type="entry name" value="AGOUTI_2"/>
    <property type="match status" value="1"/>
</dbReference>
<accession>A1YL70</accession>
<name>ASIP_PAPAN</name>
<sequence length="132" mass="14673">MDVTRLLLATLLVFLCFFTAYSHLPPEEKLRDDRSLRSNSSVNLLDFPSVSIVALNKKSKQISRKEAEKKRSSKKEASMKKVARPRTPLSAPCVATRDSCKPPAPACCDPCASCQCRFFRSACSCRVLSLNC</sequence>
<feature type="signal peptide" evidence="4">
    <location>
        <begin position="1"/>
        <end position="22"/>
    </location>
</feature>
<feature type="chain" id="PRO_0000285060" description="Agouti-signaling protein">
    <location>
        <begin position="23"/>
        <end position="132"/>
    </location>
</feature>
<feature type="domain" description="Agouti" evidence="5">
    <location>
        <begin position="93"/>
        <end position="132"/>
    </location>
</feature>
<feature type="region of interest" description="Disordered" evidence="6">
    <location>
        <begin position="62"/>
        <end position="88"/>
    </location>
</feature>
<feature type="compositionally biased region" description="Basic and acidic residues" evidence="6">
    <location>
        <begin position="63"/>
        <end position="79"/>
    </location>
</feature>
<feature type="glycosylation site" description="N-linked (GlcNAc...) asparagine" evidence="4">
    <location>
        <position position="39"/>
    </location>
</feature>
<feature type="disulfide bond" evidence="5">
    <location>
        <begin position="93"/>
        <end position="108"/>
    </location>
</feature>
<feature type="disulfide bond" evidence="5">
    <location>
        <begin position="100"/>
        <end position="114"/>
    </location>
</feature>
<feature type="disulfide bond" evidence="5">
    <location>
        <begin position="107"/>
        <end position="125"/>
    </location>
</feature>
<feature type="disulfide bond" evidence="5">
    <location>
        <begin position="111"/>
        <end position="132"/>
    </location>
</feature>
<feature type="disulfide bond" evidence="5">
    <location>
        <begin position="116"/>
        <end position="123"/>
    </location>
</feature>